<protein>
    <recommendedName>
        <fullName evidence="1">Glycerol-3-phosphate dehydrogenase [NAD(P)+]</fullName>
        <ecNumber evidence="1">1.1.1.94</ecNumber>
    </recommendedName>
    <alternativeName>
        <fullName evidence="1">NAD(P)(+)-dependent glycerol-3-phosphate dehydrogenase</fullName>
    </alternativeName>
    <alternativeName>
        <fullName evidence="1">NAD(P)H-dependent dihydroxyacetone-phosphate reductase</fullName>
    </alternativeName>
</protein>
<organism>
    <name type="scientific">Anaeromyxobacter sp. (strain K)</name>
    <dbReference type="NCBI Taxonomy" id="447217"/>
    <lineage>
        <taxon>Bacteria</taxon>
        <taxon>Pseudomonadati</taxon>
        <taxon>Myxococcota</taxon>
        <taxon>Myxococcia</taxon>
        <taxon>Myxococcales</taxon>
        <taxon>Cystobacterineae</taxon>
        <taxon>Anaeromyxobacteraceae</taxon>
        <taxon>Anaeromyxobacter</taxon>
    </lineage>
</organism>
<comment type="function">
    <text evidence="1">Catalyzes the reduction of the glycolytic intermediate dihydroxyacetone phosphate (DHAP) to sn-glycerol 3-phosphate (G3P), the key precursor for phospholipid synthesis.</text>
</comment>
<comment type="catalytic activity">
    <reaction evidence="1">
        <text>sn-glycerol 3-phosphate + NAD(+) = dihydroxyacetone phosphate + NADH + H(+)</text>
        <dbReference type="Rhea" id="RHEA:11092"/>
        <dbReference type="ChEBI" id="CHEBI:15378"/>
        <dbReference type="ChEBI" id="CHEBI:57540"/>
        <dbReference type="ChEBI" id="CHEBI:57597"/>
        <dbReference type="ChEBI" id="CHEBI:57642"/>
        <dbReference type="ChEBI" id="CHEBI:57945"/>
        <dbReference type="EC" id="1.1.1.94"/>
    </reaction>
    <physiologicalReaction direction="right-to-left" evidence="1">
        <dbReference type="Rhea" id="RHEA:11094"/>
    </physiologicalReaction>
</comment>
<comment type="catalytic activity">
    <reaction evidence="1">
        <text>sn-glycerol 3-phosphate + NADP(+) = dihydroxyacetone phosphate + NADPH + H(+)</text>
        <dbReference type="Rhea" id="RHEA:11096"/>
        <dbReference type="ChEBI" id="CHEBI:15378"/>
        <dbReference type="ChEBI" id="CHEBI:57597"/>
        <dbReference type="ChEBI" id="CHEBI:57642"/>
        <dbReference type="ChEBI" id="CHEBI:57783"/>
        <dbReference type="ChEBI" id="CHEBI:58349"/>
        <dbReference type="EC" id="1.1.1.94"/>
    </reaction>
    <physiologicalReaction direction="right-to-left" evidence="1">
        <dbReference type="Rhea" id="RHEA:11098"/>
    </physiologicalReaction>
</comment>
<comment type="pathway">
    <text evidence="1">Membrane lipid metabolism; glycerophospholipid metabolism.</text>
</comment>
<comment type="subcellular location">
    <subcellularLocation>
        <location evidence="1">Cytoplasm</location>
    </subcellularLocation>
</comment>
<comment type="similarity">
    <text evidence="1">Belongs to the NAD-dependent glycerol-3-phosphate dehydrogenase family.</text>
</comment>
<feature type="chain" id="PRO_1000123115" description="Glycerol-3-phosphate dehydrogenase [NAD(P)+]">
    <location>
        <begin position="1"/>
        <end position="332"/>
    </location>
</feature>
<feature type="active site" description="Proton acceptor" evidence="1">
    <location>
        <position position="191"/>
    </location>
</feature>
<feature type="binding site" evidence="1">
    <location>
        <position position="10"/>
    </location>
    <ligand>
        <name>NADPH</name>
        <dbReference type="ChEBI" id="CHEBI:57783"/>
    </ligand>
</feature>
<feature type="binding site" evidence="1">
    <location>
        <position position="11"/>
    </location>
    <ligand>
        <name>NADPH</name>
        <dbReference type="ChEBI" id="CHEBI:57783"/>
    </ligand>
</feature>
<feature type="binding site" evidence="1">
    <location>
        <position position="31"/>
    </location>
    <ligand>
        <name>NADPH</name>
        <dbReference type="ChEBI" id="CHEBI:57783"/>
    </ligand>
</feature>
<feature type="binding site" evidence="1">
    <location>
        <position position="105"/>
    </location>
    <ligand>
        <name>NADPH</name>
        <dbReference type="ChEBI" id="CHEBI:57783"/>
    </ligand>
</feature>
<feature type="binding site" evidence="1">
    <location>
        <position position="105"/>
    </location>
    <ligand>
        <name>sn-glycerol 3-phosphate</name>
        <dbReference type="ChEBI" id="CHEBI:57597"/>
    </ligand>
</feature>
<feature type="binding site" evidence="1">
    <location>
        <position position="136"/>
    </location>
    <ligand>
        <name>sn-glycerol 3-phosphate</name>
        <dbReference type="ChEBI" id="CHEBI:57597"/>
    </ligand>
</feature>
<feature type="binding site" evidence="1">
    <location>
        <position position="138"/>
    </location>
    <ligand>
        <name>sn-glycerol 3-phosphate</name>
        <dbReference type="ChEBI" id="CHEBI:57597"/>
    </ligand>
</feature>
<feature type="binding site" evidence="1">
    <location>
        <position position="140"/>
    </location>
    <ligand>
        <name>NADPH</name>
        <dbReference type="ChEBI" id="CHEBI:57783"/>
    </ligand>
</feature>
<feature type="binding site" evidence="1">
    <location>
        <position position="191"/>
    </location>
    <ligand>
        <name>sn-glycerol 3-phosphate</name>
        <dbReference type="ChEBI" id="CHEBI:57597"/>
    </ligand>
</feature>
<feature type="binding site" evidence="1">
    <location>
        <position position="244"/>
    </location>
    <ligand>
        <name>sn-glycerol 3-phosphate</name>
        <dbReference type="ChEBI" id="CHEBI:57597"/>
    </ligand>
</feature>
<feature type="binding site" evidence="1">
    <location>
        <position position="254"/>
    </location>
    <ligand>
        <name>sn-glycerol 3-phosphate</name>
        <dbReference type="ChEBI" id="CHEBI:57597"/>
    </ligand>
</feature>
<feature type="binding site" evidence="1">
    <location>
        <position position="255"/>
    </location>
    <ligand>
        <name>NADPH</name>
        <dbReference type="ChEBI" id="CHEBI:57783"/>
    </ligand>
</feature>
<feature type="binding site" evidence="1">
    <location>
        <position position="255"/>
    </location>
    <ligand>
        <name>sn-glycerol 3-phosphate</name>
        <dbReference type="ChEBI" id="CHEBI:57597"/>
    </ligand>
</feature>
<feature type="binding site" evidence="1">
    <location>
        <position position="256"/>
    </location>
    <ligand>
        <name>sn-glycerol 3-phosphate</name>
        <dbReference type="ChEBI" id="CHEBI:57597"/>
    </ligand>
</feature>
<feature type="binding site" evidence="1">
    <location>
        <position position="279"/>
    </location>
    <ligand>
        <name>NADPH</name>
        <dbReference type="ChEBI" id="CHEBI:57783"/>
    </ligand>
</feature>
<feature type="binding site" evidence="1">
    <location>
        <position position="281"/>
    </location>
    <ligand>
        <name>NADPH</name>
        <dbReference type="ChEBI" id="CHEBI:57783"/>
    </ligand>
</feature>
<accession>B4UB18</accession>
<reference key="1">
    <citation type="submission" date="2008-08" db="EMBL/GenBank/DDBJ databases">
        <title>Complete sequence of Anaeromyxobacter sp. K.</title>
        <authorList>
            <consortium name="US DOE Joint Genome Institute"/>
            <person name="Lucas S."/>
            <person name="Copeland A."/>
            <person name="Lapidus A."/>
            <person name="Glavina del Rio T."/>
            <person name="Dalin E."/>
            <person name="Tice H."/>
            <person name="Bruce D."/>
            <person name="Goodwin L."/>
            <person name="Pitluck S."/>
            <person name="Saunders E."/>
            <person name="Brettin T."/>
            <person name="Detter J.C."/>
            <person name="Han C."/>
            <person name="Larimer F."/>
            <person name="Land M."/>
            <person name="Hauser L."/>
            <person name="Kyrpides N."/>
            <person name="Ovchinnikiva G."/>
            <person name="Beliaev A."/>
        </authorList>
    </citation>
    <scope>NUCLEOTIDE SEQUENCE [LARGE SCALE GENOMIC DNA]</scope>
    <source>
        <strain>K</strain>
    </source>
</reference>
<dbReference type="EC" id="1.1.1.94" evidence="1"/>
<dbReference type="EMBL" id="CP001131">
    <property type="protein sequence ID" value="ACG71666.1"/>
    <property type="molecule type" value="Genomic_DNA"/>
</dbReference>
<dbReference type="RefSeq" id="WP_012524499.1">
    <property type="nucleotide sequence ID" value="NC_011145.1"/>
</dbReference>
<dbReference type="SMR" id="B4UB18"/>
<dbReference type="KEGG" id="ank:AnaeK_0424"/>
<dbReference type="HOGENOM" id="CLU_033449_0_2_7"/>
<dbReference type="OrthoDB" id="9812273at2"/>
<dbReference type="UniPathway" id="UPA00940"/>
<dbReference type="Proteomes" id="UP000001871">
    <property type="component" value="Chromosome"/>
</dbReference>
<dbReference type="GO" id="GO:0005829">
    <property type="term" value="C:cytosol"/>
    <property type="evidence" value="ECO:0007669"/>
    <property type="project" value="TreeGrafter"/>
</dbReference>
<dbReference type="GO" id="GO:0047952">
    <property type="term" value="F:glycerol-3-phosphate dehydrogenase [NAD(P)+] activity"/>
    <property type="evidence" value="ECO:0007669"/>
    <property type="project" value="UniProtKB-UniRule"/>
</dbReference>
<dbReference type="GO" id="GO:0051287">
    <property type="term" value="F:NAD binding"/>
    <property type="evidence" value="ECO:0007669"/>
    <property type="project" value="InterPro"/>
</dbReference>
<dbReference type="GO" id="GO:0005975">
    <property type="term" value="P:carbohydrate metabolic process"/>
    <property type="evidence" value="ECO:0007669"/>
    <property type="project" value="InterPro"/>
</dbReference>
<dbReference type="GO" id="GO:0046167">
    <property type="term" value="P:glycerol-3-phosphate biosynthetic process"/>
    <property type="evidence" value="ECO:0007669"/>
    <property type="project" value="UniProtKB-UniRule"/>
</dbReference>
<dbReference type="GO" id="GO:0046168">
    <property type="term" value="P:glycerol-3-phosphate catabolic process"/>
    <property type="evidence" value="ECO:0007669"/>
    <property type="project" value="InterPro"/>
</dbReference>
<dbReference type="GO" id="GO:0006650">
    <property type="term" value="P:glycerophospholipid metabolic process"/>
    <property type="evidence" value="ECO:0007669"/>
    <property type="project" value="UniProtKB-UniRule"/>
</dbReference>
<dbReference type="GO" id="GO:0008654">
    <property type="term" value="P:phospholipid biosynthetic process"/>
    <property type="evidence" value="ECO:0007669"/>
    <property type="project" value="UniProtKB-KW"/>
</dbReference>
<dbReference type="FunFam" id="1.10.1040.10:FF:000001">
    <property type="entry name" value="Glycerol-3-phosphate dehydrogenase [NAD(P)+]"/>
    <property type="match status" value="1"/>
</dbReference>
<dbReference type="FunFam" id="3.40.50.720:FF:000019">
    <property type="entry name" value="Glycerol-3-phosphate dehydrogenase [NAD(P)+]"/>
    <property type="match status" value="1"/>
</dbReference>
<dbReference type="Gene3D" id="1.10.1040.10">
    <property type="entry name" value="N-(1-d-carboxylethyl)-l-norvaline Dehydrogenase, domain 2"/>
    <property type="match status" value="1"/>
</dbReference>
<dbReference type="Gene3D" id="3.40.50.720">
    <property type="entry name" value="NAD(P)-binding Rossmann-like Domain"/>
    <property type="match status" value="1"/>
</dbReference>
<dbReference type="HAMAP" id="MF_00394">
    <property type="entry name" value="NAD_Glyc3P_dehydrog"/>
    <property type="match status" value="1"/>
</dbReference>
<dbReference type="InterPro" id="IPR008927">
    <property type="entry name" value="6-PGluconate_DH-like_C_sf"/>
</dbReference>
<dbReference type="InterPro" id="IPR013328">
    <property type="entry name" value="6PGD_dom2"/>
</dbReference>
<dbReference type="InterPro" id="IPR006168">
    <property type="entry name" value="G3P_DH_NAD-dep"/>
</dbReference>
<dbReference type="InterPro" id="IPR006109">
    <property type="entry name" value="G3P_DH_NAD-dep_C"/>
</dbReference>
<dbReference type="InterPro" id="IPR011128">
    <property type="entry name" value="G3P_DH_NAD-dep_N"/>
</dbReference>
<dbReference type="InterPro" id="IPR036291">
    <property type="entry name" value="NAD(P)-bd_dom_sf"/>
</dbReference>
<dbReference type="NCBIfam" id="NF000940">
    <property type="entry name" value="PRK00094.1-2"/>
    <property type="match status" value="1"/>
</dbReference>
<dbReference type="NCBIfam" id="NF000942">
    <property type="entry name" value="PRK00094.1-4"/>
    <property type="match status" value="1"/>
</dbReference>
<dbReference type="PANTHER" id="PTHR11728">
    <property type="entry name" value="GLYCEROL-3-PHOSPHATE DEHYDROGENASE"/>
    <property type="match status" value="1"/>
</dbReference>
<dbReference type="PANTHER" id="PTHR11728:SF1">
    <property type="entry name" value="GLYCEROL-3-PHOSPHATE DEHYDROGENASE [NAD(+)] 2, CHLOROPLASTIC"/>
    <property type="match status" value="1"/>
</dbReference>
<dbReference type="Pfam" id="PF07479">
    <property type="entry name" value="NAD_Gly3P_dh_C"/>
    <property type="match status" value="1"/>
</dbReference>
<dbReference type="Pfam" id="PF01210">
    <property type="entry name" value="NAD_Gly3P_dh_N"/>
    <property type="match status" value="1"/>
</dbReference>
<dbReference type="PIRSF" id="PIRSF000114">
    <property type="entry name" value="Glycerol-3-P_dh"/>
    <property type="match status" value="1"/>
</dbReference>
<dbReference type="PRINTS" id="PR00077">
    <property type="entry name" value="GPDHDRGNASE"/>
</dbReference>
<dbReference type="SUPFAM" id="SSF48179">
    <property type="entry name" value="6-phosphogluconate dehydrogenase C-terminal domain-like"/>
    <property type="match status" value="1"/>
</dbReference>
<dbReference type="SUPFAM" id="SSF51735">
    <property type="entry name" value="NAD(P)-binding Rossmann-fold domains"/>
    <property type="match status" value="1"/>
</dbReference>
<sequence>MRATVLGAGSWGTALASLLAGKGYTVTSWDKDAAVLDDIARNHRNERYLPGLQLPPTLHASGEVAKALEGAELVVLAVPSHAVRPVVIEAKRHVHAGTPIVCVAKGIELDTLMTMTEVVEDVLPVPLHPYLAVLSGPSFAKEVAKGLPTAVTVAARWERIAKQVQDAFHTKTFRPYTSGDVVGCEVGGCVKNVVAIAAGISDGMGFGANAMAALVTRGLAEITRLAVRKGANPLTLSGLAGLGDLVLTCSSDLSRNRTVGRGLAAGKTADAIQRELGQVAEGVRNARSARELAKRLGVDMPITEAIYRVLYEGLAPREAVTALMMRETKPEL</sequence>
<gene>
    <name evidence="1" type="primary">gpsA</name>
    <name type="ordered locus">AnaeK_0424</name>
</gene>
<keyword id="KW-0963">Cytoplasm</keyword>
<keyword id="KW-0444">Lipid biosynthesis</keyword>
<keyword id="KW-0443">Lipid metabolism</keyword>
<keyword id="KW-0520">NAD</keyword>
<keyword id="KW-0521">NADP</keyword>
<keyword id="KW-0547">Nucleotide-binding</keyword>
<keyword id="KW-0560">Oxidoreductase</keyword>
<keyword id="KW-0594">Phospholipid biosynthesis</keyword>
<keyword id="KW-1208">Phospholipid metabolism</keyword>
<proteinExistence type="inferred from homology"/>
<evidence type="ECO:0000255" key="1">
    <source>
        <dbReference type="HAMAP-Rule" id="MF_00394"/>
    </source>
</evidence>
<name>GPDA_ANASK</name>